<comment type="function">
    <text evidence="4 7 8 9">Delta-conotoxins bind to site 6 of voltage-gated sodium channels (Nav) and inhibit the inactivation process. Binding of this toxin is strongly calcium-dependent but not voltage-dependent. The binding site is most likely on the extracellular side of the sodium channel. Binds receptor sites on both mollusk and rat central nervous system, but despite its high affinity binding to rat sodium channel, it has no functional effect in vivo and in vitro on it. Also has no effect on Gambusia fish. Is important in mollusk for the paralysis of the prey. Upon injection of the peptide, a subordinate lobster assumes an exaggerated dominant posture (of a 'King-Kong' lobster!).</text>
</comment>
<comment type="subcellular location">
    <subcellularLocation>
        <location evidence="4 5 7">Secreted</location>
    </subcellularLocation>
</comment>
<comment type="tissue specificity">
    <text evidence="15 16 17 18">Expressed by the venom duct. Is present in all duct parts with a highest content in part 4 (distal part near the pharynx).</text>
</comment>
<comment type="domain">
    <text evidence="3">The presence of a 'disulfide through disulfide knot' structurally defines this protein as a knottin.</text>
</comment>
<comment type="domain">
    <text evidence="14">The cysteine framework is VI/VII (C-C-CC-C-C).</text>
</comment>
<comment type="mass spectrometry" mass="3034.2" error="0.05" method="Electrospray" evidence="5">
    <text>Without oxidation at Met-59.</text>
</comment>
<comment type="mass spectrometry" mass="3050.189" error="0.05" method="Electrospray" evidence="5">
    <text>With oxidation at Met-59.</text>
</comment>
<comment type="miscellaneous">
    <text>Veratridine increases the rate of dissociation in a dose-dependent manner.</text>
</comment>
<comment type="similarity">
    <text evidence="14">Belongs to the conotoxin O1 superfamily.</text>
</comment>
<comment type="caution">
    <text evidence="14">Several genes are coding for this toxin for which the structure by NMR has been determined. The cross-references to PDB can be found in entry AC P18511.</text>
</comment>
<proteinExistence type="evidence at protein level"/>
<accession>Q9U655</accession>
<keyword id="KW-0165">Cleavage on pair of basic residues</keyword>
<keyword id="KW-0903">Direct protein sequencing</keyword>
<keyword id="KW-1015">Disulfide bond</keyword>
<keyword id="KW-0872">Ion channel impairing toxin</keyword>
<keyword id="KW-0960">Knottin</keyword>
<keyword id="KW-0528">Neurotoxin</keyword>
<keyword id="KW-0558">Oxidation</keyword>
<keyword id="KW-0964">Secreted</keyword>
<keyword id="KW-0732">Signal</keyword>
<keyword id="KW-0800">Toxin</keyword>
<keyword id="KW-0738">Voltage-gated sodium channel impairing toxin</keyword>
<sequence length="78" mass="8722">MKLTCMMIVAVLFLTAWTFATADDSGNGLENLFSNAHHQMKNPEASKLNKRWCKQSGEMCNLLDQNCCDGYCIVLVCT</sequence>
<evidence type="ECO:0000250" key="1">
    <source>
        <dbReference type="UniProtKB" id="P18511"/>
    </source>
</evidence>
<evidence type="ECO:0000255" key="2"/>
<evidence type="ECO:0000269" key="3">
    <source>
    </source>
</evidence>
<evidence type="ECO:0000269" key="4">
    <source>
    </source>
</evidence>
<evidence type="ECO:0000269" key="5">
    <source>
    </source>
</evidence>
<evidence type="ECO:0000269" key="6">
    <source>
    </source>
</evidence>
<evidence type="ECO:0000269" key="7">
    <source>
    </source>
</evidence>
<evidence type="ECO:0000269" key="8">
    <source>
    </source>
</evidence>
<evidence type="ECO:0000269" key="9">
    <source>
    </source>
</evidence>
<evidence type="ECO:0000303" key="10">
    <source>
    </source>
</evidence>
<evidence type="ECO:0000303" key="11">
    <source>
    </source>
</evidence>
<evidence type="ECO:0000303" key="12">
    <source>
    </source>
</evidence>
<evidence type="ECO:0000303" key="13">
    <source>
    </source>
</evidence>
<evidence type="ECO:0000305" key="14"/>
<evidence type="ECO:0000305" key="15">
    <source>
    </source>
</evidence>
<evidence type="ECO:0000305" key="16">
    <source>
    </source>
</evidence>
<evidence type="ECO:0000305" key="17">
    <source>
    </source>
</evidence>
<evidence type="ECO:0000305" key="18">
    <source>
    </source>
</evidence>
<evidence type="ECO:0000312" key="19">
    <source>
        <dbReference type="EMBL" id="AAF07972.1"/>
    </source>
</evidence>
<dbReference type="EMBL" id="AF193261">
    <property type="protein sequence ID" value="AAF07972.1"/>
    <property type="molecule type" value="mRNA"/>
</dbReference>
<dbReference type="SMR" id="Q9U655"/>
<dbReference type="ConoServer" id="1094">
    <property type="toxin name" value="TxVIA precursor"/>
</dbReference>
<dbReference type="GO" id="GO:0005576">
    <property type="term" value="C:extracellular region"/>
    <property type="evidence" value="ECO:0007669"/>
    <property type="project" value="UniProtKB-SubCell"/>
</dbReference>
<dbReference type="GO" id="GO:0019871">
    <property type="term" value="F:sodium channel inhibitor activity"/>
    <property type="evidence" value="ECO:0007669"/>
    <property type="project" value="InterPro"/>
</dbReference>
<dbReference type="GO" id="GO:0090729">
    <property type="term" value="F:toxin activity"/>
    <property type="evidence" value="ECO:0007669"/>
    <property type="project" value="UniProtKB-KW"/>
</dbReference>
<dbReference type="InterPro" id="IPR004214">
    <property type="entry name" value="Conotoxin"/>
</dbReference>
<dbReference type="InterPro" id="IPR012322">
    <property type="entry name" value="Conotoxin_d-typ_CS"/>
</dbReference>
<dbReference type="Pfam" id="PF02950">
    <property type="entry name" value="Conotoxin"/>
    <property type="match status" value="1"/>
</dbReference>
<dbReference type="SUPFAM" id="SSF57059">
    <property type="entry name" value="omega toxin-like"/>
    <property type="match status" value="1"/>
</dbReference>
<dbReference type="PROSITE" id="PS60005">
    <property type="entry name" value="DELTA_CONOTOXIN"/>
    <property type="match status" value="1"/>
</dbReference>
<organism>
    <name type="scientific">Conus textile</name>
    <name type="common">Cloth-of-gold cone</name>
    <dbReference type="NCBI Taxonomy" id="6494"/>
    <lineage>
        <taxon>Eukaryota</taxon>
        <taxon>Metazoa</taxon>
        <taxon>Spiralia</taxon>
        <taxon>Lophotrochozoa</taxon>
        <taxon>Mollusca</taxon>
        <taxon>Gastropoda</taxon>
        <taxon>Caenogastropoda</taxon>
        <taxon>Neogastropoda</taxon>
        <taxon>Conoidea</taxon>
        <taxon>Conidae</taxon>
        <taxon>Conus</taxon>
        <taxon>Cylinder</taxon>
    </lineage>
</organism>
<feature type="signal peptide" evidence="2">
    <location>
        <begin position="1"/>
        <end position="22"/>
    </location>
</feature>
<feature type="propeptide" id="PRO_0000404710" evidence="14">
    <location>
        <begin position="23"/>
        <end position="49"/>
    </location>
</feature>
<feature type="peptide" id="PRO_0000404711" description="Delta-conotoxin TxVIA" evidence="4 5 7">
    <location>
        <begin position="52"/>
        <end position="78"/>
    </location>
</feature>
<feature type="modified residue" description="Methionine sulfoxide; partial" evidence="5 6">
    <location>
        <position position="59"/>
    </location>
</feature>
<feature type="disulfide bond" evidence="3">
    <location>
        <begin position="53"/>
        <end position="68"/>
    </location>
</feature>
<feature type="disulfide bond" evidence="3">
    <location>
        <begin position="60"/>
        <end position="72"/>
    </location>
</feature>
<feature type="disulfide bond" evidence="3">
    <location>
        <begin position="67"/>
        <end position="77"/>
    </location>
</feature>
<protein>
    <recommendedName>
        <fullName>Delta-conotoxin TxVIA</fullName>
    </recommendedName>
    <alternativeName>
        <fullName evidence="12">Conotoxin King-Kong 0</fullName>
        <shortName evidence="1">KK-0</shortName>
    </alternativeName>
    <alternativeName>
        <fullName evidence="11">Conotoxin tx6a</fullName>
    </alternativeName>
    <alternativeName>
        <fullName evidence="10 13">TxIA</fullName>
    </alternativeName>
    <alternativeName>
        <fullName evidence="19">TxMKLT1-0112</fullName>
    </alternativeName>
</protein>
<name>O16K0_CONTE</name>
<reference key="1">
    <citation type="journal article" date="2001" name="Mol. Biol. Evol.">
        <title>Mechanisms for evolving hypervariability: the case of conopeptides.</title>
        <authorList>
            <person name="Conticello S.G."/>
            <person name="Gilad Y."/>
            <person name="Avidan N."/>
            <person name="Ben-Asher E."/>
            <person name="Levy Z."/>
            <person name="Fainzilber M."/>
        </authorList>
    </citation>
    <scope>NUCLEOTIDE SEQUENCE [MRNA]</scope>
    <source>
        <tissue>Venom duct</tissue>
    </source>
</reference>
<reference key="2">
    <citation type="journal article" date="1989" name="Biochemistry">
        <title>A molluscivorous Conus toxin: conserved frameworks in conotoxins.</title>
        <authorList>
            <person name="Hillyard D.R."/>
            <person name="Olivera B.M."/>
            <person name="Woodward S.R."/>
            <person name="Corpuz G.P."/>
            <person name="Gray W.R."/>
            <person name="Ramilo C.A."/>
            <person name="Cruz L.J."/>
        </authorList>
    </citation>
    <scope>NUCLEOTIDE SEQUENCE [MRNA] OF 49-78</scope>
    <scope>PROTEIN SEQUENCE OF 52-78</scope>
    <scope>SUBCELLULAR LOCATION</scope>
    <scope>FUNCTION</scope>
    <source>
        <tissue>Venom</tissue>
    </source>
</reference>
<reference key="3">
    <citation type="journal article" date="1991" name="Eur. J. Biochem.">
        <title>Mollusc-specific toxins from the venom of Conus textile neovicarius.</title>
        <authorList>
            <person name="Fainzilber M."/>
            <person name="Gordon D."/>
            <person name="Hasson A."/>
            <person name="Spira M.E."/>
            <person name="Zlotkin E."/>
        </authorList>
    </citation>
    <scope>PROTEIN SEQUENCE OF 52-78</scope>
    <scope>SUBCELLULAR LOCATION</scope>
    <source>
        <strain>Neovicarius</strain>
        <tissue>Venom</tissue>
    </source>
</reference>
<reference key="4">
    <citation type="journal article" date="2009" name="Proc. Natl. Acad. Sci. U.S.A.">
        <title>Rapid sensitive analysis of cysteine rich peptide venom components.</title>
        <authorList>
            <person name="Ueberheide B.M."/>
            <person name="Fenyo D."/>
            <person name="Alewood P.F."/>
            <person name="Chait B.T."/>
        </authorList>
    </citation>
    <scope>PROTEIN SEQUENCE OF 52-78</scope>
    <scope>SUBCELLULAR LOCATION</scope>
    <scope>MASS SPECTROMETRY</scope>
    <scope>OXIDATION AT MET-59</scope>
    <source>
        <tissue>Venom</tissue>
    </source>
</reference>
<reference key="5">
    <citation type="journal article" date="1993" name="Eur. J. Neurosci.">
        <title>Alteration of sodium currents by new peptide toxins from the venom of a molluscivorous Conus snail.</title>
        <authorList>
            <person name="Hasson A."/>
            <person name="Fainzilber M."/>
            <person name="Gordon D."/>
            <person name="Zlotkin E."/>
            <person name="Spira M.E."/>
        </authorList>
    </citation>
    <scope>FUNCTION</scope>
</reference>
<reference key="6">
    <citation type="journal article" date="1994" name="J. Biol. Chem.">
        <title>A new neurotoxin receptor site on sodium channels is identified by a conotoxin that affects sodium channel inactivation in molluscs and acts as an antagonist in rat brain.</title>
        <authorList>
            <person name="Fainzilber M."/>
            <person name="Kofman O."/>
            <person name="Zlotkin E."/>
            <person name="Gordon D."/>
        </authorList>
    </citation>
    <scope>FUNCTION</scope>
</reference>
<reference key="7">
    <citation type="journal article" date="2012" name="Toxicon">
        <title>Secretion and maturation of conotoxins in the venom ducts of Conus textile.</title>
        <authorList>
            <person name="Dobson R."/>
            <person name="Collodoro M."/>
            <person name="Gilles N."/>
            <person name="Turtoi A."/>
            <person name="De Pauw E."/>
            <person name="Quinton L."/>
        </authorList>
    </citation>
    <scope>IDENTIFICATION BY MASS SPECTROMETRY</scope>
    <scope>TISSUE SPECIFICITY</scope>
    <scope>POSITION IN VENOM DUCT</scope>
    <scope>OXIDATION AT MET-59</scope>
    <source>
        <tissue>Venom</tissue>
    </source>
</reference>
<reference key="8">
    <citation type="journal article" date="2002" name="J. Biol. Chem.">
        <title>Three-dimensional solution structure of the sodium channel agonist/antagonist delta-conotoxin TxVIA.</title>
        <authorList>
            <person name="Kohno T."/>
            <person name="Sasaki T."/>
            <person name="Kobayashi K."/>
            <person name="Fainzilber M."/>
            <person name="Sato K."/>
        </authorList>
    </citation>
    <scope>STRUCTURE BY NMR</scope>
    <scope>DISULFIDE BONDS</scope>
</reference>